<accession>Q8U1M0</accession>
<protein>
    <recommendedName>
        <fullName evidence="10">NAD(P)H sulfur oxidoreductase (CoA-dependent)</fullName>
        <shortName evidence="7">NSR</shortName>
        <ecNumber evidence="3">1.8.1.18</ecNumber>
    </recommendedName>
    <alternativeName>
        <fullName evidence="6">Coenzyme A disulfide reductase</fullName>
        <shortName evidence="10">CoA-disulfide reductase</shortName>
        <shortName evidence="6">CoADR</shortName>
        <ecNumber evidence="2">1.8.1.14</ecNumber>
    </alternativeName>
    <alternativeName>
        <fullName evidence="10">NAD(P)H oxidase</fullName>
        <shortName evidence="9">NOX</shortName>
        <ecNumber evidence="5">1.6.3.-</ecNumber>
    </alternativeName>
</protein>
<proteinExistence type="evidence at protein level"/>
<reference key="1">
    <citation type="journal article" date="1999" name="Genetics">
        <title>Divergence of the hyperthermophilic archaea Pyrococcus furiosus and P. horikoshii inferred from complete genomic sequences.</title>
        <authorList>
            <person name="Maeder D.L."/>
            <person name="Weiss R.B."/>
            <person name="Dunn D.M."/>
            <person name="Cherry J.L."/>
            <person name="Gonzalez J.M."/>
            <person name="DiRuggiero J."/>
            <person name="Robb F.T."/>
        </authorList>
    </citation>
    <scope>NUCLEOTIDE SEQUENCE [LARGE SCALE GENOMIC DNA]</scope>
    <source>
        <strain>ATCC 43587 / DSM 3638 / JCM 8422 / Vc1</strain>
    </source>
</reference>
<reference key="2">
    <citation type="journal article" date="2005" name="FEBS J.">
        <title>Discovery and characterization of a coenzyme A disulfide reductase from Pyrococcus horikoshii. Implications for this disulfide metabolism of anaerobic hyperthermophiles.</title>
        <authorList>
            <person name="Harris D.R."/>
            <person name="Ward D.E."/>
            <person name="Feasel J.M."/>
            <person name="Lancaster K.M."/>
            <person name="Murphy R.D."/>
            <person name="Mallet T.C."/>
            <person name="Crane E.J. III"/>
        </authorList>
    </citation>
    <scope>FUNCTION AS A COA-DISULFIDE REDUCTASE</scope>
    <scope>CATALYTIC ACTIVITY</scope>
</reference>
<reference key="3">
    <citation type="journal article" date="2007" name="J. Bacteriol.">
        <title>Insights into the metabolism of elemental sulfur by the hyperthermophilic archaeon Pyrococcus furiosus: characterization of a coenzyme A-dependent NAD(P)H sulfur oxidoreductase.</title>
        <authorList>
            <person name="Schut G.J."/>
            <person name="Bridger S.L."/>
            <person name="Adams M.W."/>
        </authorList>
    </citation>
    <scope>FUNCTION</scope>
    <scope>CATALYTIC ACTIVITY</scope>
    <scope>COFACTOR</scope>
    <scope>BIOPHYSICOCHEMICAL PROPERTIES</scope>
    <scope>SUBUNIT</scope>
    <scope>SUBCELLULAR LOCATION</scope>
    <scope>INDUCTION</scope>
    <source>
        <strain>ATCC 43587 / DSM 3638 / JCM 8422 / Vc1</strain>
    </source>
</reference>
<reference key="4">
    <citation type="journal article" date="2011" name="J. Bacteriol.">
        <title>Deletion strains reveal metabolic roles for key elemental sulfur-responsive proteins in Pyrococcus furiosus.</title>
        <authorList>
            <person name="Bridger S.L."/>
            <person name="Clarkson S.M."/>
            <person name="Stirrett K."/>
            <person name="DeBarry M.B."/>
            <person name="Lipscomb G.L."/>
            <person name="Schut G.J."/>
            <person name="Westpheling J."/>
            <person name="Scott R.A."/>
            <person name="Adams M.W."/>
        </authorList>
    </citation>
    <scope>FUNCTION</scope>
    <scope>DISRUPTION PHENOTYPE</scope>
</reference>
<reference key="5">
    <citation type="journal article" date="2014" name="Extremophiles">
        <title>Characterization and gene deletion analysis of four homologues of group 3 pyridine nucleotide disulfide oxidoreductases from Thermococcus kodakarensis.</title>
        <authorList>
            <person name="Harnvoravongchai P."/>
            <person name="Kobori H."/>
            <person name="Orita I."/>
            <person name="Nakamura S."/>
            <person name="Imanaka T."/>
            <person name="Fukui T."/>
        </authorList>
    </citation>
    <scope>FUNCTION</scope>
    <scope>CATALYTIC ACTIVITY</scope>
    <scope>COFACTOR</scope>
    <scope>SUBUNIT</scope>
</reference>
<sequence>MEKKKVVIIGGGAAGMSAASRVKRLRPEWDVKVFEATEWVSHAPCGIPYVVEGIAPKEKLMHYPPEVFIKKRGIDLHLKAEVIEVETGYVRVRENGEEKSYEWDYLVFANGASPQIPEIEGVDLPGVFTADLPPDAVAITEYMEKNKVEDVVIIGTGYIALEMAEAFVTRGKNVTLIGRSERVLRKTFDKEITDIVEEKLRQHLNLRLHEKTLSIEGRERVEKVITDGGEYKADLVIIATGIKPNVELAKQLGVKIGETGAIWTNEKMQTSVENVYAAGDVAETKHVITGKRVWIPLAPAGNKMGYVAGSNIAGKEIEFPGVLGTSITKFMDLEIGKTGLTENEAVKEGYDVRTAFIKANTKPHYYPGGREIWLKGVVDNETNRLLGVQAVGAEILPRIDSAAAMITAGFTTKDVFFTDLAYAPPFAPVWDPLIVLARVLKF</sequence>
<name>NSR_PYRFU</name>
<dbReference type="EC" id="1.8.1.18" evidence="3"/>
<dbReference type="EC" id="1.8.1.14" evidence="2"/>
<dbReference type="EC" id="1.6.3.-" evidence="5"/>
<dbReference type="EMBL" id="AE009950">
    <property type="protein sequence ID" value="AAL81310.1"/>
    <property type="molecule type" value="Genomic_DNA"/>
</dbReference>
<dbReference type="SMR" id="Q8U1M0"/>
<dbReference type="STRING" id="186497.PF1186"/>
<dbReference type="PaxDb" id="186497-PF1186"/>
<dbReference type="KEGG" id="pfu:PF1186"/>
<dbReference type="PATRIC" id="fig|186497.12.peg.1247"/>
<dbReference type="eggNOG" id="arCOG01069">
    <property type="taxonomic scope" value="Archaea"/>
</dbReference>
<dbReference type="HOGENOM" id="CLU_003291_1_3_2"/>
<dbReference type="OrthoDB" id="27922at2157"/>
<dbReference type="PhylomeDB" id="Q8U1M0"/>
<dbReference type="BioCyc" id="MetaCyc:MONOMER-18049"/>
<dbReference type="BRENDA" id="1.8.1.18">
    <property type="organism ID" value="5243"/>
</dbReference>
<dbReference type="Proteomes" id="UP000001013">
    <property type="component" value="Chromosome"/>
</dbReference>
<dbReference type="GO" id="GO:0005737">
    <property type="term" value="C:cytoplasm"/>
    <property type="evidence" value="ECO:0007669"/>
    <property type="project" value="UniProtKB-SubCell"/>
</dbReference>
<dbReference type="GO" id="GO:0050451">
    <property type="term" value="F:CoA-disulfide reductase (NADPH) activity"/>
    <property type="evidence" value="ECO:0007669"/>
    <property type="project" value="UniProtKB-EC"/>
</dbReference>
<dbReference type="GO" id="GO:0050660">
    <property type="term" value="F:flavin adenine dinucleotide binding"/>
    <property type="evidence" value="ECO:0007669"/>
    <property type="project" value="InterPro"/>
</dbReference>
<dbReference type="GO" id="GO:0050661">
    <property type="term" value="F:NADP binding"/>
    <property type="evidence" value="ECO:0007669"/>
    <property type="project" value="InterPro"/>
</dbReference>
<dbReference type="GO" id="GO:0043914">
    <property type="term" value="F:NADPH:sulfur oxidoreductase activity"/>
    <property type="evidence" value="ECO:0007669"/>
    <property type="project" value="UniProtKB-EC"/>
</dbReference>
<dbReference type="GO" id="GO:0003756">
    <property type="term" value="F:protein disulfide isomerase activity"/>
    <property type="evidence" value="ECO:0007669"/>
    <property type="project" value="InterPro"/>
</dbReference>
<dbReference type="Gene3D" id="3.50.50.60">
    <property type="entry name" value="FAD/NAD(P)-binding domain"/>
    <property type="match status" value="3"/>
</dbReference>
<dbReference type="InterPro" id="IPR017758">
    <property type="entry name" value="CoA_disulphide_reductase"/>
</dbReference>
<dbReference type="InterPro" id="IPR050260">
    <property type="entry name" value="FAD-bd_OxRdtase"/>
</dbReference>
<dbReference type="InterPro" id="IPR036188">
    <property type="entry name" value="FAD/NAD-bd_sf"/>
</dbReference>
<dbReference type="InterPro" id="IPR023753">
    <property type="entry name" value="FAD/NAD-binding_dom"/>
</dbReference>
<dbReference type="InterPro" id="IPR016156">
    <property type="entry name" value="FAD/NAD-linked_Rdtase_dimer_sf"/>
</dbReference>
<dbReference type="InterPro" id="IPR004099">
    <property type="entry name" value="Pyr_nucl-diS_OxRdtase_dimer"/>
</dbReference>
<dbReference type="NCBIfam" id="TIGR03385">
    <property type="entry name" value="CoA_CoA_reduc"/>
    <property type="match status" value="1"/>
</dbReference>
<dbReference type="PANTHER" id="PTHR43429:SF1">
    <property type="entry name" value="NAD(P)H SULFUR OXIDOREDUCTASE (COA-DEPENDENT)"/>
    <property type="match status" value="1"/>
</dbReference>
<dbReference type="PANTHER" id="PTHR43429">
    <property type="entry name" value="PYRIDINE NUCLEOTIDE-DISULFIDE OXIDOREDUCTASE DOMAIN-CONTAINING"/>
    <property type="match status" value="1"/>
</dbReference>
<dbReference type="Pfam" id="PF07992">
    <property type="entry name" value="Pyr_redox_2"/>
    <property type="match status" value="1"/>
</dbReference>
<dbReference type="Pfam" id="PF02852">
    <property type="entry name" value="Pyr_redox_dim"/>
    <property type="match status" value="1"/>
</dbReference>
<dbReference type="PRINTS" id="PR00368">
    <property type="entry name" value="FADPNR"/>
</dbReference>
<dbReference type="PRINTS" id="PR00411">
    <property type="entry name" value="PNDRDTASEI"/>
</dbReference>
<dbReference type="SUPFAM" id="SSF51905">
    <property type="entry name" value="FAD/NAD(P)-binding domain"/>
    <property type="match status" value="1"/>
</dbReference>
<dbReference type="SUPFAM" id="SSF55424">
    <property type="entry name" value="FAD/NAD-linked reductases, dimerisation (C-terminal) domain"/>
    <property type="match status" value="1"/>
</dbReference>
<feature type="chain" id="PRO_0000184698" description="NAD(P)H sulfur oxidoreductase (CoA-dependent)">
    <location>
        <begin position="1"/>
        <end position="442"/>
    </location>
</feature>
<feature type="active site" description="Redox-active" evidence="1">
    <location>
        <position position="45"/>
    </location>
</feature>
<feature type="binding site" evidence="1">
    <location>
        <begin position="13"/>
        <end position="14"/>
    </location>
    <ligand>
        <name>FAD</name>
        <dbReference type="ChEBI" id="CHEBI:57692"/>
    </ligand>
</feature>
<feature type="binding site" evidence="1">
    <location>
        <position position="24"/>
    </location>
    <ligand>
        <name>CoA</name>
        <dbReference type="ChEBI" id="CHEBI:57287"/>
    </ligand>
</feature>
<feature type="binding site" evidence="1">
    <location>
        <begin position="35"/>
        <end position="36"/>
    </location>
    <ligand>
        <name>FAD</name>
        <dbReference type="ChEBI" id="CHEBI:57692"/>
    </ligand>
</feature>
<feature type="binding site" evidence="1">
    <location>
        <begin position="41"/>
        <end position="45"/>
    </location>
    <ligand>
        <name>CoA</name>
        <dbReference type="ChEBI" id="CHEBI:57287"/>
    </ligand>
</feature>
<feature type="binding site" evidence="1">
    <location>
        <begin position="42"/>
        <end position="44"/>
    </location>
    <ligand>
        <name>FAD</name>
        <dbReference type="ChEBI" id="CHEBI:57692"/>
    </ligand>
</feature>
<feature type="binding site" evidence="1">
    <location>
        <begin position="62"/>
        <end position="63"/>
    </location>
    <ligand>
        <name>CoA</name>
        <dbReference type="ChEBI" id="CHEBI:57287"/>
    </ligand>
</feature>
<feature type="binding site" evidence="1">
    <location>
        <position position="72"/>
    </location>
    <ligand>
        <name>CoA</name>
        <dbReference type="ChEBI" id="CHEBI:57287"/>
    </ligand>
</feature>
<feature type="binding site" evidence="1">
    <location>
        <position position="82"/>
    </location>
    <ligand>
        <name>FAD</name>
        <dbReference type="ChEBI" id="CHEBI:57692"/>
    </ligand>
</feature>
<feature type="binding site" evidence="1">
    <location>
        <position position="280"/>
    </location>
    <ligand>
        <name>FAD</name>
        <dbReference type="ChEBI" id="CHEBI:57692"/>
    </ligand>
</feature>
<feature type="binding site" evidence="1">
    <location>
        <position position="298"/>
    </location>
    <ligand>
        <name>FAD</name>
        <dbReference type="ChEBI" id="CHEBI:57692"/>
    </ligand>
</feature>
<feature type="binding site" evidence="1">
    <location>
        <position position="302"/>
    </location>
    <ligand>
        <name>CoA</name>
        <dbReference type="ChEBI" id="CHEBI:57287"/>
    </ligand>
</feature>
<feature type="binding site" evidence="1">
    <location>
        <position position="358"/>
    </location>
    <ligand>
        <name>CoA</name>
        <dbReference type="ChEBI" id="CHEBI:57287"/>
    </ligand>
</feature>
<feature type="binding site" evidence="1">
    <location>
        <position position="422"/>
    </location>
    <ligand>
        <name>FAD</name>
        <dbReference type="ChEBI" id="CHEBI:57692"/>
    </ligand>
</feature>
<feature type="binding site" evidence="1">
    <location>
        <position position="430"/>
    </location>
    <ligand>
        <name>CoA</name>
        <dbReference type="ChEBI" id="CHEBI:57287"/>
    </ligand>
</feature>
<feature type="binding site" evidence="1">
    <location>
        <position position="438"/>
    </location>
    <ligand>
        <name>CoA</name>
        <dbReference type="ChEBI" id="CHEBI:57287"/>
    </ligand>
</feature>
<keyword id="KW-0963">Cytoplasm</keyword>
<keyword id="KW-0274">FAD</keyword>
<keyword id="KW-0285">Flavoprotein</keyword>
<keyword id="KW-0520">NAD</keyword>
<keyword id="KW-0521">NADP</keyword>
<keyword id="KW-0560">Oxidoreductase</keyword>
<keyword id="KW-0676">Redox-active center</keyword>
<keyword id="KW-1185">Reference proteome</keyword>
<organism>
    <name type="scientific">Pyrococcus furiosus (strain ATCC 43587 / DSM 3638 / JCM 8422 / Vc1)</name>
    <dbReference type="NCBI Taxonomy" id="186497"/>
    <lineage>
        <taxon>Archaea</taxon>
        <taxon>Methanobacteriati</taxon>
        <taxon>Methanobacteriota</taxon>
        <taxon>Thermococci</taxon>
        <taxon>Thermococcales</taxon>
        <taxon>Thermococcaceae</taxon>
        <taxon>Pyrococcus</taxon>
    </lineage>
</organism>
<evidence type="ECO:0000250" key="1">
    <source>
        <dbReference type="UniProtKB" id="O58308"/>
    </source>
</evidence>
<evidence type="ECO:0000269" key="2">
    <source>
    </source>
</evidence>
<evidence type="ECO:0000269" key="3">
    <source>
    </source>
</evidence>
<evidence type="ECO:0000269" key="4">
    <source>
    </source>
</evidence>
<evidence type="ECO:0000269" key="5">
    <source>
    </source>
</evidence>
<evidence type="ECO:0000303" key="6">
    <source>
    </source>
</evidence>
<evidence type="ECO:0000303" key="7">
    <source>
    </source>
</evidence>
<evidence type="ECO:0000303" key="8">
    <source>
    </source>
</evidence>
<evidence type="ECO:0000303" key="9">
    <source>
    </source>
</evidence>
<evidence type="ECO:0000305" key="10"/>
<evidence type="ECO:0000305" key="11">
    <source>
    </source>
</evidence>
<gene>
    <name evidence="8" type="primary">nsr</name>
    <name type="ordered locus">PF1186</name>
</gene>
<comment type="function">
    <text evidence="2 3 5 11">Catalyzes the CoA-dependent reduction of elemental sulfur (S(0)) to produce hydrogen sulfide (PubMed:17449625, PubMed:24723088). Can use both NADPH and NADH, but shows a preference for NADPH (PubMed:24723088). May enable S(0) to be used, via sulfide, for iron-sulfur cluster synthesis by SipA (Probable). Also shows coenzyme A disulfide reductase (CoADR) activity with both NADH and NADPH (PubMed:15720393, PubMed:17449625). However, CoADR specific activity is about 20-fold lower than the sulfur reduction assay and CoADR activity appears to be an artifactual side reaction and is not thought to have any physiological relevance (PubMed:17449625). Also shows NAD(P)H oxidase activity with both NADH and NADPH (PubMed:24723088).</text>
</comment>
<comment type="catalytic activity">
    <reaction evidence="3 5">
        <text>hydrogen sulfide + NADP(+) = sulfur + NADPH</text>
        <dbReference type="Rhea" id="RHEA:36595"/>
        <dbReference type="ChEBI" id="CHEBI:26833"/>
        <dbReference type="ChEBI" id="CHEBI:29919"/>
        <dbReference type="ChEBI" id="CHEBI:57783"/>
        <dbReference type="ChEBI" id="CHEBI:58349"/>
        <dbReference type="EC" id="1.8.1.18"/>
    </reaction>
    <physiologicalReaction direction="right-to-left" evidence="3 5">
        <dbReference type="Rhea" id="RHEA:36597"/>
    </physiologicalReaction>
</comment>
<comment type="catalytic activity">
    <reaction evidence="3 5">
        <text>hydrogen sulfide + NAD(+) = sulfur + NADH</text>
        <dbReference type="Rhea" id="RHEA:36599"/>
        <dbReference type="ChEBI" id="CHEBI:26833"/>
        <dbReference type="ChEBI" id="CHEBI:29919"/>
        <dbReference type="ChEBI" id="CHEBI:57540"/>
        <dbReference type="ChEBI" id="CHEBI:57945"/>
        <dbReference type="EC" id="1.8.1.18"/>
    </reaction>
    <physiologicalReaction direction="right-to-left" evidence="3 5">
        <dbReference type="Rhea" id="RHEA:36601"/>
    </physiologicalReaction>
</comment>
<comment type="catalytic activity">
    <reaction evidence="2 3">
        <text>NADP(+) + 2 CoA = CoA-disulfide + NADPH + H(+)</text>
        <dbReference type="Rhea" id="RHEA:14705"/>
        <dbReference type="ChEBI" id="CHEBI:15378"/>
        <dbReference type="ChEBI" id="CHEBI:57287"/>
        <dbReference type="ChEBI" id="CHEBI:57783"/>
        <dbReference type="ChEBI" id="CHEBI:58349"/>
        <dbReference type="ChEBI" id="CHEBI:62209"/>
        <dbReference type="EC" id="1.8.1.14"/>
    </reaction>
</comment>
<comment type="catalytic activity">
    <reaction evidence="2">
        <text>NAD(+) + 2 CoA = CoA-disulfide + NADH + H(+)</text>
        <dbReference type="Rhea" id="RHEA:14701"/>
        <dbReference type="ChEBI" id="CHEBI:15378"/>
        <dbReference type="ChEBI" id="CHEBI:57287"/>
        <dbReference type="ChEBI" id="CHEBI:57540"/>
        <dbReference type="ChEBI" id="CHEBI:57945"/>
        <dbReference type="ChEBI" id="CHEBI:62209"/>
    </reaction>
</comment>
<comment type="cofactor">
    <cofactor evidence="3 5">
        <name>FAD</name>
        <dbReference type="ChEBI" id="CHEBI:57692"/>
    </cofactor>
    <text evidence="1">Binds 1 FAD per subunit.</text>
</comment>
<comment type="biophysicochemical properties">
    <kinetics>
        <KM evidence="3">8.5 mM for NADPH</KM>
        <KM evidence="3">3.3 mM for NADH</KM>
        <KM evidence="3">18 uM for CoA</KM>
        <KM evidence="3">10 uM for CoA-disulfide</KM>
    </kinetics>
    <phDependence>
        <text evidence="3">Optimum pH is 6.5 for sulfide production.</text>
    </phDependence>
</comment>
<comment type="subunit">
    <text evidence="3 5">Homodimer.</text>
</comment>
<comment type="subcellular location">
    <subcellularLocation>
        <location evidence="3">Cytoplasm</location>
    </subcellularLocation>
</comment>
<comment type="induction">
    <text evidence="3">Up-regulated up to sevenfold by elemental sulfur addition.</text>
</comment>
<comment type="disruption phenotype">
    <text evidence="4">Deletion mutant does not exhibit an obvious phenotype and produces sulfide and acetate in amounts comparable to those produced by the parent strain.</text>
</comment>
<comment type="similarity">
    <text evidence="10">Belongs to the class-III pyridine nucleotide-disulfide oxidoreductase family.</text>
</comment>